<protein>
    <recommendedName>
        <fullName evidence="2">Conotoxin Cal5.2</fullName>
    </recommendedName>
</protein>
<comment type="function">
    <text evidence="3">Probable neurotoxin with unknown target. Possibly targets ion channels.</text>
</comment>
<comment type="subcellular location">
    <subcellularLocation>
        <location evidence="4">Secreted</location>
    </subcellularLocation>
</comment>
<comment type="tissue specificity">
    <text evidence="4">Expressed by the venom duct.</text>
</comment>
<comment type="domain">
    <text evidence="3">The cysteine framework is V (CC-CC).</text>
</comment>
<comment type="PTM">
    <text evidence="3">Contains 2 disulfide bonds that can be either 'C1-C3, C2-C4' or 'C1-C4, C2-C3', since these disulfide connectivities have been observed for conotoxins with cysteine framework V (for examples, see AC P0DQQ7 and AC P81755).</text>
</comment>
<comment type="similarity">
    <text evidence="3">Belongs to the conotoxin T superfamily.</text>
</comment>
<proteinExistence type="evidence at protein level"/>
<accession>D2Y172</accession>
<organism>
    <name type="scientific">Californiconus californicus</name>
    <name type="common">California cone</name>
    <name type="synonym">Conus californicus</name>
    <dbReference type="NCBI Taxonomy" id="1736779"/>
    <lineage>
        <taxon>Eukaryota</taxon>
        <taxon>Metazoa</taxon>
        <taxon>Spiralia</taxon>
        <taxon>Lophotrochozoa</taxon>
        <taxon>Mollusca</taxon>
        <taxon>Gastropoda</taxon>
        <taxon>Caenogastropoda</taxon>
        <taxon>Neogastropoda</taxon>
        <taxon>Conoidea</taxon>
        <taxon>Conidae</taxon>
        <taxon>Californiconus</taxon>
    </lineage>
</organism>
<reference key="1">
    <citation type="journal article" date="2011" name="Toxicon">
        <title>Diversity of conotoxin types from Conus californicus reflects a diversity of prey types and a novel evolutionary history.</title>
        <authorList>
            <person name="Elliger C.A."/>
            <person name="Richmond T.A."/>
            <person name="Lebaric Z.N."/>
            <person name="Pierce N.T."/>
            <person name="Sweedler J.V."/>
            <person name="Gilly W.F."/>
        </authorList>
    </citation>
    <scope>NUCLEOTIDE SEQUENCE [MRNA]</scope>
    <scope>AMIDATION AT VAL-65</scope>
    <source>
        <tissue>Venom duct</tissue>
    </source>
</reference>
<dbReference type="EMBL" id="GU290202">
    <property type="protein sequence ID" value="ADB43129.1"/>
    <property type="molecule type" value="mRNA"/>
</dbReference>
<dbReference type="ConoServer" id="3984">
    <property type="toxin name" value="Cal5.2 precursor"/>
</dbReference>
<dbReference type="GO" id="GO:0005576">
    <property type="term" value="C:extracellular region"/>
    <property type="evidence" value="ECO:0007669"/>
    <property type="project" value="UniProtKB-SubCell"/>
</dbReference>
<dbReference type="GO" id="GO:0099106">
    <property type="term" value="F:ion channel regulator activity"/>
    <property type="evidence" value="ECO:0007669"/>
    <property type="project" value="UniProtKB-KW"/>
</dbReference>
<dbReference type="GO" id="GO:0090729">
    <property type="term" value="F:toxin activity"/>
    <property type="evidence" value="ECO:0007669"/>
    <property type="project" value="UniProtKB-KW"/>
</dbReference>
<dbReference type="InterPro" id="IPR031565">
    <property type="entry name" value="T-conotoxin"/>
</dbReference>
<dbReference type="Pfam" id="PF16981">
    <property type="entry name" value="Chi-conotoxin"/>
    <property type="match status" value="1"/>
</dbReference>
<evidence type="ECO:0000255" key="1"/>
<evidence type="ECO:0000303" key="2">
    <source>
    </source>
</evidence>
<evidence type="ECO:0000305" key="3"/>
<evidence type="ECO:0000305" key="4">
    <source>
    </source>
</evidence>
<feature type="signal peptide" evidence="1">
    <location>
        <begin position="1"/>
        <end position="20"/>
    </location>
</feature>
<feature type="propeptide" id="PRO_5000566289" evidence="4">
    <location>
        <begin position="21"/>
        <end position="51"/>
    </location>
</feature>
<feature type="peptide" id="PRO_5000566290" description="Conotoxin Cal5.2" evidence="4">
    <location>
        <begin position="53"/>
        <end position="65"/>
    </location>
</feature>
<feature type="modified residue" description="Valine amide" evidence="4">
    <location>
        <position position="65"/>
    </location>
</feature>
<name>CT52_CONCL</name>
<sequence>MMYCLPVVCILLLLIPSSATFVVESRLEKDQAQSFTGDAWKRVSPIHEMIQRSQCCAVKKNCCHVG</sequence>
<keyword id="KW-0027">Amidation</keyword>
<keyword id="KW-1015">Disulfide bond</keyword>
<keyword id="KW-0872">Ion channel impairing toxin</keyword>
<keyword id="KW-0528">Neurotoxin</keyword>
<keyword id="KW-0964">Secreted</keyword>
<keyword id="KW-0732">Signal</keyword>
<keyword id="KW-0800">Toxin</keyword>